<reference key="1">
    <citation type="journal article" date="1996" name="Microbiology">
        <title>Cloning and sequencing of a 40.6 kb segment in the 73 degrees-76 degrees region of the Bacillus subtilis chromosome containing genes for trehalose metabolism and acetoin utilization.</title>
        <authorList>
            <person name="Yamamoto H."/>
            <person name="Uchiyama S."/>
            <person name="Sekiguchi J."/>
        </authorList>
    </citation>
    <scope>NUCLEOTIDE SEQUENCE [GENOMIC DNA]</scope>
    <source>
        <strain>168 / AC327</strain>
    </source>
</reference>
<reference key="2">
    <citation type="journal article" date="1997" name="Nature">
        <title>The complete genome sequence of the Gram-positive bacterium Bacillus subtilis.</title>
        <authorList>
            <person name="Kunst F."/>
            <person name="Ogasawara N."/>
            <person name="Moszer I."/>
            <person name="Albertini A.M."/>
            <person name="Alloni G."/>
            <person name="Azevedo V."/>
            <person name="Bertero M.G."/>
            <person name="Bessieres P."/>
            <person name="Bolotin A."/>
            <person name="Borchert S."/>
            <person name="Borriss R."/>
            <person name="Boursier L."/>
            <person name="Brans A."/>
            <person name="Braun M."/>
            <person name="Brignell S.C."/>
            <person name="Bron S."/>
            <person name="Brouillet S."/>
            <person name="Bruschi C.V."/>
            <person name="Caldwell B."/>
            <person name="Capuano V."/>
            <person name="Carter N.M."/>
            <person name="Choi S.-K."/>
            <person name="Codani J.-J."/>
            <person name="Connerton I.F."/>
            <person name="Cummings N.J."/>
            <person name="Daniel R.A."/>
            <person name="Denizot F."/>
            <person name="Devine K.M."/>
            <person name="Duesterhoeft A."/>
            <person name="Ehrlich S.D."/>
            <person name="Emmerson P.T."/>
            <person name="Entian K.-D."/>
            <person name="Errington J."/>
            <person name="Fabret C."/>
            <person name="Ferrari E."/>
            <person name="Foulger D."/>
            <person name="Fritz C."/>
            <person name="Fujita M."/>
            <person name="Fujita Y."/>
            <person name="Fuma S."/>
            <person name="Galizzi A."/>
            <person name="Galleron N."/>
            <person name="Ghim S.-Y."/>
            <person name="Glaser P."/>
            <person name="Goffeau A."/>
            <person name="Golightly E.J."/>
            <person name="Grandi G."/>
            <person name="Guiseppi G."/>
            <person name="Guy B.J."/>
            <person name="Haga K."/>
            <person name="Haiech J."/>
            <person name="Harwood C.R."/>
            <person name="Henaut A."/>
            <person name="Hilbert H."/>
            <person name="Holsappel S."/>
            <person name="Hosono S."/>
            <person name="Hullo M.-F."/>
            <person name="Itaya M."/>
            <person name="Jones L.-M."/>
            <person name="Joris B."/>
            <person name="Karamata D."/>
            <person name="Kasahara Y."/>
            <person name="Klaerr-Blanchard M."/>
            <person name="Klein C."/>
            <person name="Kobayashi Y."/>
            <person name="Koetter P."/>
            <person name="Koningstein G."/>
            <person name="Krogh S."/>
            <person name="Kumano M."/>
            <person name="Kurita K."/>
            <person name="Lapidus A."/>
            <person name="Lardinois S."/>
            <person name="Lauber J."/>
            <person name="Lazarevic V."/>
            <person name="Lee S.-M."/>
            <person name="Levine A."/>
            <person name="Liu H."/>
            <person name="Masuda S."/>
            <person name="Mauel C."/>
            <person name="Medigue C."/>
            <person name="Medina N."/>
            <person name="Mellado R.P."/>
            <person name="Mizuno M."/>
            <person name="Moestl D."/>
            <person name="Nakai S."/>
            <person name="Noback M."/>
            <person name="Noone D."/>
            <person name="O'Reilly M."/>
            <person name="Ogawa K."/>
            <person name="Ogiwara A."/>
            <person name="Oudega B."/>
            <person name="Park S.-H."/>
            <person name="Parro V."/>
            <person name="Pohl T.M."/>
            <person name="Portetelle D."/>
            <person name="Porwollik S."/>
            <person name="Prescott A.M."/>
            <person name="Presecan E."/>
            <person name="Pujic P."/>
            <person name="Purnelle B."/>
            <person name="Rapoport G."/>
            <person name="Rey M."/>
            <person name="Reynolds S."/>
            <person name="Rieger M."/>
            <person name="Rivolta C."/>
            <person name="Rocha E."/>
            <person name="Roche B."/>
            <person name="Rose M."/>
            <person name="Sadaie Y."/>
            <person name="Sato T."/>
            <person name="Scanlan E."/>
            <person name="Schleich S."/>
            <person name="Schroeter R."/>
            <person name="Scoffone F."/>
            <person name="Sekiguchi J."/>
            <person name="Sekowska A."/>
            <person name="Seror S.J."/>
            <person name="Serror P."/>
            <person name="Shin B.-S."/>
            <person name="Soldo B."/>
            <person name="Sorokin A."/>
            <person name="Tacconi E."/>
            <person name="Takagi T."/>
            <person name="Takahashi H."/>
            <person name="Takemaru K."/>
            <person name="Takeuchi M."/>
            <person name="Tamakoshi A."/>
            <person name="Tanaka T."/>
            <person name="Terpstra P."/>
            <person name="Tognoni A."/>
            <person name="Tosato V."/>
            <person name="Uchiyama S."/>
            <person name="Vandenbol M."/>
            <person name="Vannier F."/>
            <person name="Vassarotti A."/>
            <person name="Viari A."/>
            <person name="Wambutt R."/>
            <person name="Wedler E."/>
            <person name="Wedler H."/>
            <person name="Weitzenegger T."/>
            <person name="Winters P."/>
            <person name="Wipat A."/>
            <person name="Yamamoto H."/>
            <person name="Yamane K."/>
            <person name="Yasumoto K."/>
            <person name="Yata K."/>
            <person name="Yoshida K."/>
            <person name="Yoshikawa H.-F."/>
            <person name="Zumstein E."/>
            <person name="Yoshikawa H."/>
            <person name="Danchin A."/>
        </authorList>
    </citation>
    <scope>NUCLEOTIDE SEQUENCE [LARGE SCALE GENOMIC DNA]</scope>
    <source>
        <strain>168</strain>
    </source>
</reference>
<reference key="3">
    <citation type="journal article" date="1999" name="J. Bacteriol.">
        <title>Biochemical and molecular characterization of the Bacillus subtilis acetoin catabolic pathway.</title>
        <authorList>
            <person name="Huang M."/>
            <person name="Oppermann-Sanio F.B."/>
            <person name="Steinbuechel A."/>
        </authorList>
    </citation>
    <scope>NUCLEOTIDE SEQUENCE [GENOMIC DNA] OF 1-587</scope>
    <source>
        <strain>168 / ATCC 33234 / DSM 402 / NBRC 111470 / NCIMB 10106</strain>
    </source>
</reference>
<reference key="4">
    <citation type="journal article" date="2001" name="J. Bacteriol.">
        <title>Regulation of the acetoin catabolic pathway is controlled by sigma L in Bacillus subtilis.</title>
        <authorList>
            <person name="Ali N.O."/>
            <person name="Bignon J."/>
            <person name="Rapoport G."/>
            <person name="Debarbouille M."/>
        </authorList>
    </citation>
    <scope>FUNCTION</scope>
    <scope>INDUCTION</scope>
</reference>
<reference key="5">
    <citation type="journal article" date="2006" name="Appl. Microbiol. Biotechnol.">
        <title>An acetoin-regulated expression system of Bacillus subtilis.</title>
        <authorList>
            <person name="Silbersack J."/>
            <person name="Juergen B."/>
            <person name="Hecker M."/>
            <person name="Schneidinger B."/>
            <person name="Schmuck R."/>
            <person name="Schweder T."/>
        </authorList>
    </citation>
    <scope>FUNCTION</scope>
</reference>
<proteinExistence type="evidence at transcript level"/>
<feature type="chain" id="PRO_0000361683" description="Acetoin dehydrogenase operon transcriptional activator AcoR">
    <location>
        <begin position="1"/>
        <end position="605"/>
    </location>
</feature>
<feature type="domain" description="Sigma-54 factor interaction" evidence="2">
    <location>
        <begin position="295"/>
        <end position="520"/>
    </location>
</feature>
<feature type="DNA-binding region" description="H-T-H motif" evidence="1">
    <location>
        <begin position="578"/>
        <end position="597"/>
    </location>
</feature>
<feature type="binding site" evidence="2">
    <location>
        <begin position="323"/>
        <end position="330"/>
    </location>
    <ligand>
        <name>ATP</name>
        <dbReference type="ChEBI" id="CHEBI:30616"/>
    </ligand>
</feature>
<feature type="binding site" evidence="2">
    <location>
        <begin position="387"/>
        <end position="396"/>
    </location>
    <ligand>
        <name>ATP</name>
        <dbReference type="ChEBI" id="CHEBI:30616"/>
    </ligand>
</feature>
<feature type="sequence conflict" description="In Ref. 3; AAC05586." evidence="5" ref="3">
    <original>P</original>
    <variation>A</variation>
    <location>
        <position position="550"/>
    </location>
</feature>
<name>ACOR_BACSU</name>
<accession>O31551</accession>
<accession>O31406</accession>
<accession>Q79F13</accession>
<organism>
    <name type="scientific">Bacillus subtilis (strain 168)</name>
    <dbReference type="NCBI Taxonomy" id="224308"/>
    <lineage>
        <taxon>Bacteria</taxon>
        <taxon>Bacillati</taxon>
        <taxon>Bacillota</taxon>
        <taxon>Bacilli</taxon>
        <taxon>Bacillales</taxon>
        <taxon>Bacillaceae</taxon>
        <taxon>Bacillus</taxon>
    </lineage>
</organism>
<sequence length="605" mass="67160">MNSVPNDLQTWKRFVKDGVLDEARLRKRIAESWHRCKKAEVNPYLEKGPKVLQQTELDQQSKKHSFFLTTAKPYLEKLLPAIKEMEMMALLIDSDGVVLALDGHPRALYEAKRINFVEGACWTETAVGTNAIGTALHISEPVAIQGSEHYSIASHLWNCSAAPIHHEDGSLAGVIDISCPAAGAHPHMLGIATAIAYAAERELAAKSREKELELISRFGERAASSVPMVLCNTKQHIISASMPIRTSMPDWQGRHLYELKERGYSIENAVTIGDGGTCFYLSEQKKKKAFRFNGVIGQSGRSQAMLMHLERAAATDASVCLSGETGTGKEVAARALHENSERRHGPFVAVNCGAIPSDLIESELFGYAEGAFTGAKRNGYKGAFQKANQGTLFLDEIGEISHSMQVALLRVLQERKITPIGGTKEIPVDIRVIAATHCDLRELAENGKIREDLFYRLHVYPIELPPLRDRTEDIPDLFEYYKQKNHWPGDLPSDFCNVLKQWKWPGNIRELFNVFERLSIRFPDGRLRDESLPALLEAAGLPASSAEKKPAAAGVLTFREQIQKDMMIKALESAKGNVSQAAKISGIPRSTFYKRLKKFNLSAES</sequence>
<comment type="function">
    <text evidence="3 4">Acts as a transcriptional activator of the acoABCL operon encoding the acetoin dehydrogenase complex.</text>
</comment>
<comment type="induction">
    <text evidence="3">Negatively controlled by CcpA, a global regulator of carbon catabolite repression.</text>
</comment>
<comment type="sequence caution" evidence="5">
    <conflict type="erroneous initiation">
        <sequence resource="EMBL-CDS" id="AAC05586"/>
    </conflict>
</comment>
<evidence type="ECO:0000250" key="1"/>
<evidence type="ECO:0000255" key="2">
    <source>
        <dbReference type="PROSITE-ProRule" id="PRU00193"/>
    </source>
</evidence>
<evidence type="ECO:0000269" key="3">
    <source>
    </source>
</evidence>
<evidence type="ECO:0000269" key="4">
    <source>
    </source>
</evidence>
<evidence type="ECO:0000305" key="5"/>
<gene>
    <name type="primary">acoR</name>
    <name type="synonym">yfjG</name>
    <name type="synonym">yzcB</name>
    <name type="ordered locus">BSU08100</name>
</gene>
<keyword id="KW-0010">Activator</keyword>
<keyword id="KW-0067">ATP-binding</keyword>
<keyword id="KW-0238">DNA-binding</keyword>
<keyword id="KW-0547">Nucleotide-binding</keyword>
<keyword id="KW-1185">Reference proteome</keyword>
<keyword id="KW-0804">Transcription</keyword>
<keyword id="KW-0805">Transcription regulation</keyword>
<keyword id="KW-0902">Two-component regulatory system</keyword>
<dbReference type="EMBL" id="D78509">
    <property type="protein sequence ID" value="BAA24292.1"/>
    <property type="molecule type" value="Genomic_DNA"/>
</dbReference>
<dbReference type="EMBL" id="AL009126">
    <property type="protein sequence ID" value="CAB12639.1"/>
    <property type="molecule type" value="Genomic_DNA"/>
</dbReference>
<dbReference type="EMBL" id="AF006075">
    <property type="protein sequence ID" value="AAC05586.1"/>
    <property type="status" value="ALT_INIT"/>
    <property type="molecule type" value="Genomic_DNA"/>
</dbReference>
<dbReference type="PIR" id="H69581">
    <property type="entry name" value="H69581"/>
</dbReference>
<dbReference type="RefSeq" id="NP_388691.1">
    <property type="nucleotide sequence ID" value="NC_000964.3"/>
</dbReference>
<dbReference type="RefSeq" id="WP_003244100.1">
    <property type="nucleotide sequence ID" value="NZ_OZ025638.1"/>
</dbReference>
<dbReference type="SMR" id="O31551"/>
<dbReference type="FunCoup" id="O31551">
    <property type="interactions" value="93"/>
</dbReference>
<dbReference type="STRING" id="224308.BSU08100"/>
<dbReference type="PaxDb" id="224308-BSU08100"/>
<dbReference type="DNASU" id="936148"/>
<dbReference type="EnsemblBacteria" id="CAB12639">
    <property type="protein sequence ID" value="CAB12639"/>
    <property type="gene ID" value="BSU_08100"/>
</dbReference>
<dbReference type="GeneID" id="936148"/>
<dbReference type="KEGG" id="bsu:BSU08100"/>
<dbReference type="PATRIC" id="fig|224308.179.peg.876"/>
<dbReference type="eggNOG" id="COG3284">
    <property type="taxonomic scope" value="Bacteria"/>
</dbReference>
<dbReference type="InParanoid" id="O31551"/>
<dbReference type="OrthoDB" id="9771372at2"/>
<dbReference type="PhylomeDB" id="O31551"/>
<dbReference type="BioCyc" id="BSUB:BSU08100-MONOMER"/>
<dbReference type="Proteomes" id="UP000001570">
    <property type="component" value="Chromosome"/>
</dbReference>
<dbReference type="GO" id="GO:0032993">
    <property type="term" value="C:protein-DNA complex"/>
    <property type="evidence" value="ECO:0000318"/>
    <property type="project" value="GO_Central"/>
</dbReference>
<dbReference type="GO" id="GO:0005524">
    <property type="term" value="F:ATP binding"/>
    <property type="evidence" value="ECO:0007669"/>
    <property type="project" value="UniProtKB-KW"/>
</dbReference>
<dbReference type="GO" id="GO:0016887">
    <property type="term" value="F:ATP hydrolysis activity"/>
    <property type="evidence" value="ECO:0007669"/>
    <property type="project" value="InterPro"/>
</dbReference>
<dbReference type="GO" id="GO:0000987">
    <property type="term" value="F:cis-regulatory region sequence-specific DNA binding"/>
    <property type="evidence" value="ECO:0000318"/>
    <property type="project" value="GO_Central"/>
</dbReference>
<dbReference type="GO" id="GO:0001216">
    <property type="term" value="F:DNA-binding transcription activator activity"/>
    <property type="evidence" value="ECO:0000318"/>
    <property type="project" value="GO_Central"/>
</dbReference>
<dbReference type="GO" id="GO:0000160">
    <property type="term" value="P:phosphorelay signal transduction system"/>
    <property type="evidence" value="ECO:0007669"/>
    <property type="project" value="UniProtKB-KW"/>
</dbReference>
<dbReference type="GO" id="GO:0045893">
    <property type="term" value="P:positive regulation of DNA-templated transcription"/>
    <property type="evidence" value="ECO:0000318"/>
    <property type="project" value="GO_Central"/>
</dbReference>
<dbReference type="CDD" id="cd00009">
    <property type="entry name" value="AAA"/>
    <property type="match status" value="1"/>
</dbReference>
<dbReference type="FunFam" id="3.40.50.300:FF:000006">
    <property type="entry name" value="DNA-binding transcriptional regulator NtrC"/>
    <property type="match status" value="1"/>
</dbReference>
<dbReference type="Gene3D" id="1.10.8.60">
    <property type="match status" value="1"/>
</dbReference>
<dbReference type="Gene3D" id="3.30.450.40">
    <property type="match status" value="1"/>
</dbReference>
<dbReference type="Gene3D" id="1.10.10.60">
    <property type="entry name" value="Homeodomain-like"/>
    <property type="match status" value="1"/>
</dbReference>
<dbReference type="Gene3D" id="3.40.50.300">
    <property type="entry name" value="P-loop containing nucleotide triphosphate hydrolases"/>
    <property type="match status" value="1"/>
</dbReference>
<dbReference type="InterPro" id="IPR003593">
    <property type="entry name" value="AAA+_ATPase"/>
</dbReference>
<dbReference type="InterPro" id="IPR003018">
    <property type="entry name" value="GAF"/>
</dbReference>
<dbReference type="InterPro" id="IPR029016">
    <property type="entry name" value="GAF-like_dom_sf"/>
</dbReference>
<dbReference type="InterPro" id="IPR009057">
    <property type="entry name" value="Homeodomain-like_sf"/>
</dbReference>
<dbReference type="InterPro" id="IPR002197">
    <property type="entry name" value="HTH_Fis"/>
</dbReference>
<dbReference type="InterPro" id="IPR027417">
    <property type="entry name" value="P-loop_NTPase"/>
</dbReference>
<dbReference type="InterPro" id="IPR002078">
    <property type="entry name" value="Sigma_54_int"/>
</dbReference>
<dbReference type="InterPro" id="IPR025944">
    <property type="entry name" value="Sigma_54_int_dom_CS"/>
</dbReference>
<dbReference type="PANTHER" id="PTHR32071:SF101">
    <property type="entry name" value="ACETOIN DEHYDROGENASE OPERON TRANSCRIPTIONAL ACTIVATOR ACOR"/>
    <property type="match status" value="1"/>
</dbReference>
<dbReference type="PANTHER" id="PTHR32071">
    <property type="entry name" value="TRANSCRIPTIONAL REGULATORY PROTEIN"/>
    <property type="match status" value="1"/>
</dbReference>
<dbReference type="Pfam" id="PF01590">
    <property type="entry name" value="GAF"/>
    <property type="match status" value="1"/>
</dbReference>
<dbReference type="Pfam" id="PF02954">
    <property type="entry name" value="HTH_8"/>
    <property type="match status" value="1"/>
</dbReference>
<dbReference type="Pfam" id="PF00158">
    <property type="entry name" value="Sigma54_activat"/>
    <property type="match status" value="1"/>
</dbReference>
<dbReference type="PRINTS" id="PR01590">
    <property type="entry name" value="HTHFIS"/>
</dbReference>
<dbReference type="SMART" id="SM00382">
    <property type="entry name" value="AAA"/>
    <property type="match status" value="1"/>
</dbReference>
<dbReference type="SUPFAM" id="SSF55781">
    <property type="entry name" value="GAF domain-like"/>
    <property type="match status" value="1"/>
</dbReference>
<dbReference type="SUPFAM" id="SSF46689">
    <property type="entry name" value="Homeodomain-like"/>
    <property type="match status" value="1"/>
</dbReference>
<dbReference type="SUPFAM" id="SSF52540">
    <property type="entry name" value="P-loop containing nucleoside triphosphate hydrolases"/>
    <property type="match status" value="1"/>
</dbReference>
<dbReference type="PROSITE" id="PS00688">
    <property type="entry name" value="SIGMA54_INTERACT_3"/>
    <property type="match status" value="1"/>
</dbReference>
<dbReference type="PROSITE" id="PS50045">
    <property type="entry name" value="SIGMA54_INTERACT_4"/>
    <property type="match status" value="1"/>
</dbReference>
<protein>
    <recommendedName>
        <fullName>Acetoin dehydrogenase operon transcriptional activator AcoR</fullName>
    </recommendedName>
</protein>